<organism>
    <name type="scientific">Listeria monocytogenes serotype 4b (strain F2365)</name>
    <dbReference type="NCBI Taxonomy" id="265669"/>
    <lineage>
        <taxon>Bacteria</taxon>
        <taxon>Bacillati</taxon>
        <taxon>Bacillota</taxon>
        <taxon>Bacilli</taxon>
        <taxon>Bacillales</taxon>
        <taxon>Listeriaceae</taxon>
        <taxon>Listeria</taxon>
    </lineage>
</organism>
<comment type="function">
    <text evidence="1">This protein binds specifically to 23S rRNA; its binding is stimulated by other ribosomal proteins, e.g. L4, L17, and L20. It is important during the early stages of 50S assembly. It makes multiple contacts with different domains of the 23S rRNA in the assembled 50S subunit and ribosome (By similarity).</text>
</comment>
<comment type="function">
    <text evidence="1">The globular domain of the protein is located near the polypeptide exit tunnel on the outside of the subunit, while an extended beta-hairpin is found that lines the wall of the exit tunnel in the center of the 70S ribosome.</text>
</comment>
<comment type="subunit">
    <text evidence="1">Part of the 50S ribosomal subunit.</text>
</comment>
<comment type="similarity">
    <text evidence="1">Belongs to the universal ribosomal protein uL22 family.</text>
</comment>
<dbReference type="EMBL" id="AE017262">
    <property type="protein sequence ID" value="AAT05365.1"/>
    <property type="molecule type" value="Genomic_DNA"/>
</dbReference>
<dbReference type="RefSeq" id="WP_003727697.1">
    <property type="nucleotide sequence ID" value="NC_002973.6"/>
</dbReference>
<dbReference type="SMR" id="Q71WF1"/>
<dbReference type="GeneID" id="93240508"/>
<dbReference type="KEGG" id="lmf:LMOf2365_2600"/>
<dbReference type="HOGENOM" id="CLU_083987_3_3_9"/>
<dbReference type="GO" id="GO:0022625">
    <property type="term" value="C:cytosolic large ribosomal subunit"/>
    <property type="evidence" value="ECO:0007669"/>
    <property type="project" value="TreeGrafter"/>
</dbReference>
<dbReference type="GO" id="GO:0019843">
    <property type="term" value="F:rRNA binding"/>
    <property type="evidence" value="ECO:0007669"/>
    <property type="project" value="UniProtKB-UniRule"/>
</dbReference>
<dbReference type="GO" id="GO:0003735">
    <property type="term" value="F:structural constituent of ribosome"/>
    <property type="evidence" value="ECO:0007669"/>
    <property type="project" value="InterPro"/>
</dbReference>
<dbReference type="GO" id="GO:0006412">
    <property type="term" value="P:translation"/>
    <property type="evidence" value="ECO:0007669"/>
    <property type="project" value="UniProtKB-UniRule"/>
</dbReference>
<dbReference type="CDD" id="cd00336">
    <property type="entry name" value="Ribosomal_L22"/>
    <property type="match status" value="1"/>
</dbReference>
<dbReference type="FunFam" id="3.90.470.10:FF:000001">
    <property type="entry name" value="50S ribosomal protein L22"/>
    <property type="match status" value="1"/>
</dbReference>
<dbReference type="Gene3D" id="3.90.470.10">
    <property type="entry name" value="Ribosomal protein L22/L17"/>
    <property type="match status" value="1"/>
</dbReference>
<dbReference type="HAMAP" id="MF_01331_B">
    <property type="entry name" value="Ribosomal_uL22_B"/>
    <property type="match status" value="1"/>
</dbReference>
<dbReference type="InterPro" id="IPR001063">
    <property type="entry name" value="Ribosomal_uL22"/>
</dbReference>
<dbReference type="InterPro" id="IPR005727">
    <property type="entry name" value="Ribosomal_uL22_bac/chlpt-type"/>
</dbReference>
<dbReference type="InterPro" id="IPR047867">
    <property type="entry name" value="Ribosomal_uL22_bac/org-type"/>
</dbReference>
<dbReference type="InterPro" id="IPR018260">
    <property type="entry name" value="Ribosomal_uL22_CS"/>
</dbReference>
<dbReference type="InterPro" id="IPR036394">
    <property type="entry name" value="Ribosomal_uL22_sf"/>
</dbReference>
<dbReference type="NCBIfam" id="TIGR01044">
    <property type="entry name" value="rplV_bact"/>
    <property type="match status" value="1"/>
</dbReference>
<dbReference type="PANTHER" id="PTHR13501">
    <property type="entry name" value="CHLOROPLAST 50S RIBOSOMAL PROTEIN L22-RELATED"/>
    <property type="match status" value="1"/>
</dbReference>
<dbReference type="PANTHER" id="PTHR13501:SF8">
    <property type="entry name" value="LARGE RIBOSOMAL SUBUNIT PROTEIN UL22M"/>
    <property type="match status" value="1"/>
</dbReference>
<dbReference type="Pfam" id="PF00237">
    <property type="entry name" value="Ribosomal_L22"/>
    <property type="match status" value="1"/>
</dbReference>
<dbReference type="SUPFAM" id="SSF54843">
    <property type="entry name" value="Ribosomal protein L22"/>
    <property type="match status" value="1"/>
</dbReference>
<dbReference type="PROSITE" id="PS00464">
    <property type="entry name" value="RIBOSOMAL_L22"/>
    <property type="match status" value="1"/>
</dbReference>
<name>RL22_LISMF</name>
<gene>
    <name evidence="1" type="primary">rplV</name>
    <name type="ordered locus">LMOf2365_2600</name>
</gene>
<reference key="1">
    <citation type="journal article" date="2004" name="Nucleic Acids Res.">
        <title>Whole genome comparisons of serotype 4b and 1/2a strains of the food-borne pathogen Listeria monocytogenes reveal new insights into the core genome components of this species.</title>
        <authorList>
            <person name="Nelson K.E."/>
            <person name="Fouts D.E."/>
            <person name="Mongodin E.F."/>
            <person name="Ravel J."/>
            <person name="DeBoy R.T."/>
            <person name="Kolonay J.F."/>
            <person name="Rasko D.A."/>
            <person name="Angiuoli S.V."/>
            <person name="Gill S.R."/>
            <person name="Paulsen I.T."/>
            <person name="Peterson J.D."/>
            <person name="White O."/>
            <person name="Nelson W.C."/>
            <person name="Nierman W.C."/>
            <person name="Beanan M.J."/>
            <person name="Brinkac L.M."/>
            <person name="Daugherty S.C."/>
            <person name="Dodson R.J."/>
            <person name="Durkin A.S."/>
            <person name="Madupu R."/>
            <person name="Haft D.H."/>
            <person name="Selengut J."/>
            <person name="Van Aken S.E."/>
            <person name="Khouri H.M."/>
            <person name="Fedorova N."/>
            <person name="Forberger H.A."/>
            <person name="Tran B."/>
            <person name="Kathariou S."/>
            <person name="Wonderling L.D."/>
            <person name="Uhlich G.A."/>
            <person name="Bayles D.O."/>
            <person name="Luchansky J.B."/>
            <person name="Fraser C.M."/>
        </authorList>
    </citation>
    <scope>NUCLEOTIDE SEQUENCE [LARGE SCALE GENOMIC DNA]</scope>
    <source>
        <strain>F2365</strain>
    </source>
</reference>
<accession>Q71WF1</accession>
<sequence length="118" mass="12874">MASEVTSAKAVAKTVRIAPRKARIVIDLIRGKQVGEAIAILKYTPRSASPIIEKVLKSAIANAEHNYDLDINNLVVEEAFVDEGPTLKRFRPRAQGRASAINKRTSHITVVVSEVKEG</sequence>
<evidence type="ECO:0000255" key="1">
    <source>
        <dbReference type="HAMAP-Rule" id="MF_01331"/>
    </source>
</evidence>
<evidence type="ECO:0000305" key="2"/>
<proteinExistence type="inferred from homology"/>
<protein>
    <recommendedName>
        <fullName evidence="1">Large ribosomal subunit protein uL22</fullName>
    </recommendedName>
    <alternativeName>
        <fullName evidence="2">50S ribosomal protein L22</fullName>
    </alternativeName>
</protein>
<keyword id="KW-0687">Ribonucleoprotein</keyword>
<keyword id="KW-0689">Ribosomal protein</keyword>
<keyword id="KW-0694">RNA-binding</keyword>
<keyword id="KW-0699">rRNA-binding</keyword>
<feature type="chain" id="PRO_0000125171" description="Large ribosomal subunit protein uL22">
    <location>
        <begin position="1"/>
        <end position="118"/>
    </location>
</feature>